<accession>A2RHW0</accession>
<proteinExistence type="inferred from homology"/>
<sequence length="379" mass="42853">MTKITGIIAEFNPFHKGHEYLLNQIDGLKIVAMSGNWMQRGEPAIFDKWTRAEMALSCGADLVVELPVMVSVQAADFFASGAVDILKNLGITDLAFGSESAIDYNEIADIYETKETEMESFIKALPDQLSYPEKTQMMWQHFTGIKFDGNTPNHVLALAYAKAAAGKNINLQAIKRVGKFHSTKLTEGFASATALRQQLFSLTDEVGQSLFSLTDLSAIENHVPSVILETYASPKTNWAAYFPLLQYKIRLDDHLENIFQVNQELSVRLKNAIKSAKNFDELVELVYTKRYTKARVRRLLTYILLNIPKEFNLPKEIHILGFSKAGQEILAQNRGKIISKIGQKPWDELTQKADEIYQLGNVDFKEQNFGRKPIIKREK</sequence>
<name>TMCAL_LACLM</name>
<organism>
    <name type="scientific">Lactococcus lactis subsp. cremoris (strain MG1363)</name>
    <dbReference type="NCBI Taxonomy" id="416870"/>
    <lineage>
        <taxon>Bacteria</taxon>
        <taxon>Bacillati</taxon>
        <taxon>Bacillota</taxon>
        <taxon>Bacilli</taxon>
        <taxon>Lactobacillales</taxon>
        <taxon>Streptococcaceae</taxon>
        <taxon>Lactococcus</taxon>
        <taxon>Lactococcus cremoris subsp. cremoris</taxon>
    </lineage>
</organism>
<gene>
    <name evidence="1" type="primary">tmcAL</name>
    <name type="ordered locus">llmg_0241</name>
</gene>
<dbReference type="EC" id="6.3.4.-" evidence="1"/>
<dbReference type="EMBL" id="AM406671">
    <property type="protein sequence ID" value="CAL96847.1"/>
    <property type="molecule type" value="Genomic_DNA"/>
</dbReference>
<dbReference type="RefSeq" id="WP_011834323.1">
    <property type="nucleotide sequence ID" value="NC_009004.1"/>
</dbReference>
<dbReference type="SMR" id="A2RHW0"/>
<dbReference type="STRING" id="416870.llmg_0241"/>
<dbReference type="KEGG" id="llm:llmg_0241"/>
<dbReference type="eggNOG" id="COG1323">
    <property type="taxonomic scope" value="Bacteria"/>
</dbReference>
<dbReference type="HOGENOM" id="CLU_038915_0_2_9"/>
<dbReference type="OrthoDB" id="9769796at2"/>
<dbReference type="PhylomeDB" id="A2RHW0"/>
<dbReference type="Proteomes" id="UP000000364">
    <property type="component" value="Chromosome"/>
</dbReference>
<dbReference type="GO" id="GO:0005737">
    <property type="term" value="C:cytoplasm"/>
    <property type="evidence" value="ECO:0007669"/>
    <property type="project" value="UniProtKB-SubCell"/>
</dbReference>
<dbReference type="GO" id="GO:0005524">
    <property type="term" value="F:ATP binding"/>
    <property type="evidence" value="ECO:0007669"/>
    <property type="project" value="UniProtKB-KW"/>
</dbReference>
<dbReference type="GO" id="GO:0016879">
    <property type="term" value="F:ligase activity, forming carbon-nitrogen bonds"/>
    <property type="evidence" value="ECO:0007669"/>
    <property type="project" value="UniProtKB-UniRule"/>
</dbReference>
<dbReference type="GO" id="GO:0000049">
    <property type="term" value="F:tRNA binding"/>
    <property type="evidence" value="ECO:0007669"/>
    <property type="project" value="UniProtKB-KW"/>
</dbReference>
<dbReference type="GO" id="GO:0006400">
    <property type="term" value="P:tRNA modification"/>
    <property type="evidence" value="ECO:0007669"/>
    <property type="project" value="UniProtKB-UniRule"/>
</dbReference>
<dbReference type="Gene3D" id="3.40.50.620">
    <property type="entry name" value="HUPs"/>
    <property type="match status" value="1"/>
</dbReference>
<dbReference type="HAMAP" id="MF_01539">
    <property type="entry name" value="TmcAL"/>
    <property type="match status" value="1"/>
</dbReference>
<dbReference type="InterPro" id="IPR014729">
    <property type="entry name" value="Rossmann-like_a/b/a_fold"/>
</dbReference>
<dbReference type="InterPro" id="IPR008513">
    <property type="entry name" value="tRNA(Met)_cyd_acetate_ligase"/>
</dbReference>
<dbReference type="NCBIfam" id="NF010191">
    <property type="entry name" value="PRK13670.1"/>
    <property type="match status" value="1"/>
</dbReference>
<dbReference type="PANTHER" id="PTHR37825">
    <property type="entry name" value="TRNA(MET) CYTIDINE ACETATE LIGASE"/>
    <property type="match status" value="1"/>
</dbReference>
<dbReference type="PANTHER" id="PTHR37825:SF1">
    <property type="entry name" value="TRNA(MET) CYTIDINE ACETATE LIGASE"/>
    <property type="match status" value="1"/>
</dbReference>
<dbReference type="Pfam" id="PF05636">
    <property type="entry name" value="HIGH_NTase1"/>
    <property type="match status" value="1"/>
</dbReference>
<dbReference type="SUPFAM" id="SSF52374">
    <property type="entry name" value="Nucleotidylyl transferase"/>
    <property type="match status" value="1"/>
</dbReference>
<protein>
    <recommendedName>
        <fullName evidence="1">tRNA(Met) cytidine acetate ligase</fullName>
        <ecNumber evidence="1">6.3.4.-</ecNumber>
    </recommendedName>
</protein>
<reference key="1">
    <citation type="journal article" date="2007" name="J. Bacteriol.">
        <title>The complete genome sequence of the lactic acid bacterial paradigm Lactococcus lactis subsp. cremoris MG1363.</title>
        <authorList>
            <person name="Wegmann U."/>
            <person name="O'Connell-Motherway M."/>
            <person name="Zomer A."/>
            <person name="Buist G."/>
            <person name="Shearman C."/>
            <person name="Canchaya C."/>
            <person name="Ventura M."/>
            <person name="Goesmann A."/>
            <person name="Gasson M.J."/>
            <person name="Kuipers O.P."/>
            <person name="van Sinderen D."/>
            <person name="Kok J."/>
        </authorList>
    </citation>
    <scope>NUCLEOTIDE SEQUENCE [LARGE SCALE GENOMIC DNA]</scope>
    <source>
        <strain>MG1363</strain>
    </source>
</reference>
<keyword id="KW-0067">ATP-binding</keyword>
<keyword id="KW-0963">Cytoplasm</keyword>
<keyword id="KW-0436">Ligase</keyword>
<keyword id="KW-0547">Nucleotide-binding</keyword>
<keyword id="KW-0694">RNA-binding</keyword>
<keyword id="KW-0819">tRNA processing</keyword>
<keyword id="KW-0820">tRNA-binding</keyword>
<comment type="function">
    <text evidence="1">Catalyzes the formation of N(4)-acetylcytidine (ac(4)C) at the wobble position of elongator tRNA(Met), using acetate and ATP as substrates. First activates an acetate ion to form acetyladenylate (Ac-AMP) and then transfers the acetyl group to tRNA to form ac(4)C34.</text>
</comment>
<comment type="catalytic activity">
    <reaction evidence="1">
        <text>cytidine(34) in elongator tRNA(Met) + acetate + ATP = N(4)-acetylcytidine(34) in elongator tRNA(Met) + AMP + diphosphate</text>
        <dbReference type="Rhea" id="RHEA:58144"/>
        <dbReference type="Rhea" id="RHEA-COMP:10693"/>
        <dbReference type="Rhea" id="RHEA-COMP:10694"/>
        <dbReference type="ChEBI" id="CHEBI:30089"/>
        <dbReference type="ChEBI" id="CHEBI:30616"/>
        <dbReference type="ChEBI" id="CHEBI:33019"/>
        <dbReference type="ChEBI" id="CHEBI:74900"/>
        <dbReference type="ChEBI" id="CHEBI:82748"/>
        <dbReference type="ChEBI" id="CHEBI:456215"/>
    </reaction>
</comment>
<comment type="subcellular location">
    <subcellularLocation>
        <location evidence="1">Cytoplasm</location>
    </subcellularLocation>
</comment>
<comment type="similarity">
    <text evidence="1">Belongs to the TmcAL family.</text>
</comment>
<evidence type="ECO:0000255" key="1">
    <source>
        <dbReference type="HAMAP-Rule" id="MF_01539"/>
    </source>
</evidence>
<feature type="chain" id="PRO_0000300178" description="tRNA(Met) cytidine acetate ligase">
    <location>
        <begin position="1"/>
        <end position="379"/>
    </location>
</feature>
<feature type="binding site" evidence="1">
    <location>
        <begin position="8"/>
        <end position="21"/>
    </location>
    <ligand>
        <name>ATP</name>
        <dbReference type="ChEBI" id="CHEBI:30616"/>
    </ligand>
</feature>
<feature type="binding site" evidence="1">
    <location>
        <position position="97"/>
    </location>
    <ligand>
        <name>ATP</name>
        <dbReference type="ChEBI" id="CHEBI:30616"/>
    </ligand>
</feature>
<feature type="binding site" evidence="1">
    <location>
        <position position="153"/>
    </location>
    <ligand>
        <name>ATP</name>
        <dbReference type="ChEBI" id="CHEBI:30616"/>
    </ligand>
</feature>
<feature type="binding site" evidence="1">
    <location>
        <position position="176"/>
    </location>
    <ligand>
        <name>ATP</name>
        <dbReference type="ChEBI" id="CHEBI:30616"/>
    </ligand>
</feature>